<reference key="1">
    <citation type="journal article" date="2004" name="Nucleic Acids Res.">
        <title>Genome sequence of Symbiobacterium thermophilum, an uncultivable bacterium that depends on microbial commensalism.</title>
        <authorList>
            <person name="Ueda K."/>
            <person name="Yamashita A."/>
            <person name="Ishikawa J."/>
            <person name="Shimada M."/>
            <person name="Watsuji T."/>
            <person name="Morimura K."/>
            <person name="Ikeda H."/>
            <person name="Hattori M."/>
            <person name="Beppu T."/>
        </authorList>
    </citation>
    <scope>NUCLEOTIDE SEQUENCE [LARGE SCALE GENOMIC DNA]</scope>
    <source>
        <strain>DSM 24528 / JCM 14929 / IAM 14863 / T</strain>
    </source>
</reference>
<keyword id="KW-0963">Cytoplasm</keyword>
<keyword id="KW-0324">Glycolysis</keyword>
<keyword id="KW-0456">Lyase</keyword>
<keyword id="KW-0460">Magnesium</keyword>
<keyword id="KW-0479">Metal-binding</keyword>
<keyword id="KW-1185">Reference proteome</keyword>
<keyword id="KW-0964">Secreted</keyword>
<accession>Q67SV9</accession>
<proteinExistence type="inferred from homology"/>
<evidence type="ECO:0000255" key="1">
    <source>
        <dbReference type="HAMAP-Rule" id="MF_00318"/>
    </source>
</evidence>
<dbReference type="EC" id="4.2.1.11" evidence="1"/>
<dbReference type="EMBL" id="AP006840">
    <property type="protein sequence ID" value="BAD39234.1"/>
    <property type="molecule type" value="Genomic_DNA"/>
</dbReference>
<dbReference type="RefSeq" id="WP_011194384.1">
    <property type="nucleotide sequence ID" value="NC_006177.1"/>
</dbReference>
<dbReference type="SMR" id="Q67SV9"/>
<dbReference type="STRING" id="292459.STH249"/>
<dbReference type="KEGG" id="sth:STH249"/>
<dbReference type="eggNOG" id="COG0148">
    <property type="taxonomic scope" value="Bacteria"/>
</dbReference>
<dbReference type="HOGENOM" id="CLU_031223_2_1_9"/>
<dbReference type="OrthoDB" id="9804716at2"/>
<dbReference type="UniPathway" id="UPA00109">
    <property type="reaction ID" value="UER00187"/>
</dbReference>
<dbReference type="Proteomes" id="UP000000417">
    <property type="component" value="Chromosome"/>
</dbReference>
<dbReference type="GO" id="GO:0009986">
    <property type="term" value="C:cell surface"/>
    <property type="evidence" value="ECO:0007669"/>
    <property type="project" value="UniProtKB-SubCell"/>
</dbReference>
<dbReference type="GO" id="GO:0005576">
    <property type="term" value="C:extracellular region"/>
    <property type="evidence" value="ECO:0007669"/>
    <property type="project" value="UniProtKB-SubCell"/>
</dbReference>
<dbReference type="GO" id="GO:0000015">
    <property type="term" value="C:phosphopyruvate hydratase complex"/>
    <property type="evidence" value="ECO:0007669"/>
    <property type="project" value="InterPro"/>
</dbReference>
<dbReference type="GO" id="GO:0000287">
    <property type="term" value="F:magnesium ion binding"/>
    <property type="evidence" value="ECO:0007669"/>
    <property type="project" value="UniProtKB-UniRule"/>
</dbReference>
<dbReference type="GO" id="GO:0004634">
    <property type="term" value="F:phosphopyruvate hydratase activity"/>
    <property type="evidence" value="ECO:0007669"/>
    <property type="project" value="UniProtKB-UniRule"/>
</dbReference>
<dbReference type="GO" id="GO:0006096">
    <property type="term" value="P:glycolytic process"/>
    <property type="evidence" value="ECO:0007669"/>
    <property type="project" value="UniProtKB-UniRule"/>
</dbReference>
<dbReference type="CDD" id="cd03313">
    <property type="entry name" value="enolase"/>
    <property type="match status" value="1"/>
</dbReference>
<dbReference type="FunFam" id="3.20.20.120:FF:000001">
    <property type="entry name" value="Enolase"/>
    <property type="match status" value="1"/>
</dbReference>
<dbReference type="FunFam" id="3.30.390.10:FF:000001">
    <property type="entry name" value="Enolase"/>
    <property type="match status" value="1"/>
</dbReference>
<dbReference type="Gene3D" id="3.20.20.120">
    <property type="entry name" value="Enolase-like C-terminal domain"/>
    <property type="match status" value="1"/>
</dbReference>
<dbReference type="Gene3D" id="3.30.390.10">
    <property type="entry name" value="Enolase-like, N-terminal domain"/>
    <property type="match status" value="1"/>
</dbReference>
<dbReference type="HAMAP" id="MF_00318">
    <property type="entry name" value="Enolase"/>
    <property type="match status" value="1"/>
</dbReference>
<dbReference type="InterPro" id="IPR000941">
    <property type="entry name" value="Enolase"/>
</dbReference>
<dbReference type="InterPro" id="IPR036849">
    <property type="entry name" value="Enolase-like_C_sf"/>
</dbReference>
<dbReference type="InterPro" id="IPR029017">
    <property type="entry name" value="Enolase-like_N"/>
</dbReference>
<dbReference type="InterPro" id="IPR020810">
    <property type="entry name" value="Enolase_C"/>
</dbReference>
<dbReference type="InterPro" id="IPR020809">
    <property type="entry name" value="Enolase_CS"/>
</dbReference>
<dbReference type="InterPro" id="IPR020811">
    <property type="entry name" value="Enolase_N"/>
</dbReference>
<dbReference type="NCBIfam" id="TIGR01060">
    <property type="entry name" value="eno"/>
    <property type="match status" value="1"/>
</dbReference>
<dbReference type="PANTHER" id="PTHR11902">
    <property type="entry name" value="ENOLASE"/>
    <property type="match status" value="1"/>
</dbReference>
<dbReference type="PANTHER" id="PTHR11902:SF1">
    <property type="entry name" value="ENOLASE"/>
    <property type="match status" value="1"/>
</dbReference>
<dbReference type="Pfam" id="PF00113">
    <property type="entry name" value="Enolase_C"/>
    <property type="match status" value="1"/>
</dbReference>
<dbReference type="Pfam" id="PF03952">
    <property type="entry name" value="Enolase_N"/>
    <property type="match status" value="1"/>
</dbReference>
<dbReference type="PIRSF" id="PIRSF001400">
    <property type="entry name" value="Enolase"/>
    <property type="match status" value="1"/>
</dbReference>
<dbReference type="PRINTS" id="PR00148">
    <property type="entry name" value="ENOLASE"/>
</dbReference>
<dbReference type="SFLD" id="SFLDF00002">
    <property type="entry name" value="enolase"/>
    <property type="match status" value="1"/>
</dbReference>
<dbReference type="SFLD" id="SFLDG00178">
    <property type="entry name" value="enolase"/>
    <property type="match status" value="1"/>
</dbReference>
<dbReference type="SMART" id="SM01192">
    <property type="entry name" value="Enolase_C"/>
    <property type="match status" value="1"/>
</dbReference>
<dbReference type="SMART" id="SM01193">
    <property type="entry name" value="Enolase_N"/>
    <property type="match status" value="1"/>
</dbReference>
<dbReference type="SUPFAM" id="SSF51604">
    <property type="entry name" value="Enolase C-terminal domain-like"/>
    <property type="match status" value="1"/>
</dbReference>
<dbReference type="SUPFAM" id="SSF54826">
    <property type="entry name" value="Enolase N-terminal domain-like"/>
    <property type="match status" value="1"/>
</dbReference>
<dbReference type="PROSITE" id="PS00164">
    <property type="entry name" value="ENOLASE"/>
    <property type="match status" value="1"/>
</dbReference>
<feature type="chain" id="PRO_0000133989" description="Enolase">
    <location>
        <begin position="1"/>
        <end position="430"/>
    </location>
</feature>
<feature type="active site" description="Proton donor" evidence="1">
    <location>
        <position position="205"/>
    </location>
</feature>
<feature type="active site" description="Proton acceptor" evidence="1">
    <location>
        <position position="338"/>
    </location>
</feature>
<feature type="binding site" evidence="1">
    <location>
        <position position="163"/>
    </location>
    <ligand>
        <name>(2R)-2-phosphoglycerate</name>
        <dbReference type="ChEBI" id="CHEBI:58289"/>
    </ligand>
</feature>
<feature type="binding site" evidence="1">
    <location>
        <position position="242"/>
    </location>
    <ligand>
        <name>Mg(2+)</name>
        <dbReference type="ChEBI" id="CHEBI:18420"/>
    </ligand>
</feature>
<feature type="binding site" evidence="1">
    <location>
        <position position="286"/>
    </location>
    <ligand>
        <name>Mg(2+)</name>
        <dbReference type="ChEBI" id="CHEBI:18420"/>
    </ligand>
</feature>
<feature type="binding site" evidence="1">
    <location>
        <position position="313"/>
    </location>
    <ligand>
        <name>Mg(2+)</name>
        <dbReference type="ChEBI" id="CHEBI:18420"/>
    </ligand>
</feature>
<feature type="binding site" evidence="1">
    <location>
        <position position="338"/>
    </location>
    <ligand>
        <name>(2R)-2-phosphoglycerate</name>
        <dbReference type="ChEBI" id="CHEBI:58289"/>
    </ligand>
</feature>
<feature type="binding site" evidence="1">
    <location>
        <position position="367"/>
    </location>
    <ligand>
        <name>(2R)-2-phosphoglycerate</name>
        <dbReference type="ChEBI" id="CHEBI:58289"/>
    </ligand>
</feature>
<feature type="binding site" evidence="1">
    <location>
        <position position="368"/>
    </location>
    <ligand>
        <name>(2R)-2-phosphoglycerate</name>
        <dbReference type="ChEBI" id="CHEBI:58289"/>
    </ligand>
</feature>
<feature type="binding site" evidence="1">
    <location>
        <position position="389"/>
    </location>
    <ligand>
        <name>(2R)-2-phosphoglycerate</name>
        <dbReference type="ChEBI" id="CHEBI:58289"/>
    </ligand>
</feature>
<protein>
    <recommendedName>
        <fullName evidence="1">Enolase</fullName>
        <ecNumber evidence="1">4.2.1.11</ecNumber>
    </recommendedName>
    <alternativeName>
        <fullName evidence="1">2-phospho-D-glycerate hydro-lyase</fullName>
    </alternativeName>
    <alternativeName>
        <fullName evidence="1">2-phosphoglycerate dehydratase</fullName>
    </alternativeName>
</protein>
<comment type="function">
    <text evidence="1">Catalyzes the reversible conversion of 2-phosphoglycerate (2-PG) into phosphoenolpyruvate (PEP). It is essential for the degradation of carbohydrates via glycolysis.</text>
</comment>
<comment type="catalytic activity">
    <reaction evidence="1">
        <text>(2R)-2-phosphoglycerate = phosphoenolpyruvate + H2O</text>
        <dbReference type="Rhea" id="RHEA:10164"/>
        <dbReference type="ChEBI" id="CHEBI:15377"/>
        <dbReference type="ChEBI" id="CHEBI:58289"/>
        <dbReference type="ChEBI" id="CHEBI:58702"/>
        <dbReference type="EC" id="4.2.1.11"/>
    </reaction>
</comment>
<comment type="cofactor">
    <cofactor evidence="1">
        <name>Mg(2+)</name>
        <dbReference type="ChEBI" id="CHEBI:18420"/>
    </cofactor>
    <text evidence="1">Binds a second Mg(2+) ion via substrate during catalysis.</text>
</comment>
<comment type="pathway">
    <text evidence="1">Carbohydrate degradation; glycolysis; pyruvate from D-glyceraldehyde 3-phosphate: step 4/5.</text>
</comment>
<comment type="subcellular location">
    <subcellularLocation>
        <location evidence="1">Cytoplasm</location>
    </subcellularLocation>
    <subcellularLocation>
        <location evidence="1">Secreted</location>
    </subcellularLocation>
    <subcellularLocation>
        <location evidence="1">Cell surface</location>
    </subcellularLocation>
    <text evidence="1">Fractions of enolase are present in both the cytoplasm and on the cell surface.</text>
</comment>
<comment type="similarity">
    <text evidence="1">Belongs to the enolase family.</text>
</comment>
<name>ENO_SYMTH</name>
<gene>
    <name evidence="1" type="primary">eno</name>
    <name type="ordered locus">STH249</name>
</gene>
<organism>
    <name type="scientific">Symbiobacterium thermophilum (strain DSM 24528 / JCM 14929 / IAM 14863 / T)</name>
    <dbReference type="NCBI Taxonomy" id="292459"/>
    <lineage>
        <taxon>Bacteria</taxon>
        <taxon>Bacillati</taxon>
        <taxon>Bacillota</taxon>
        <taxon>Clostridia</taxon>
        <taxon>Eubacteriales</taxon>
        <taxon>Symbiobacteriaceae</taxon>
        <taxon>Symbiobacterium</taxon>
    </lineage>
</organism>
<sequence>MTTIVNVHAREVLDSRGNPTVEVEVILASGTTGRAIVPSGASTGQFEAVELRDGDKQRYLGKGVLTAVRNVNEVIAEAVVGMDATEQVEVDQAMLALDGTPNKSKLGANAILGVSLATARAAAAELGIPLYRHVGGLTARTLPVPMMNIINGGKHADNNVDMQEFMIFPAGAPSFAESLRMGTEVFHALKSVLKSKGYNTAVGDEGGFAPDLKSNEEAILVILEAIEKAGYKPGQDVFLCMDVASSELFQDGKYVLAGEGNKVLSTEQLIDLWDSWTRQYPIVSIEDGVAEDEWEAWVELTRRIGDRVQLVGDDFFVTNTERLARGIGMNAANAILVKVNQIGTLTETLEAVALAHRNGYSSVMSHRSGETEDTTIADLAVALNCGQIKTGAPSRTDRVAKYNQLLRIEEELGDAAIFAGTSVIRGRKQG</sequence>